<name>GLSK_MOUSE</name>
<gene>
    <name type="primary">Gls</name>
    <name type="synonym">Gls1</name>
    <name type="synonym">Kiaa0838</name>
</gene>
<proteinExistence type="evidence at protein level"/>
<evidence type="ECO:0000250" key="1">
    <source>
        <dbReference type="UniProtKB" id="O94925"/>
    </source>
</evidence>
<evidence type="ECO:0000250" key="2">
    <source>
        <dbReference type="UniProtKB" id="P13264"/>
    </source>
</evidence>
<evidence type="ECO:0000255" key="3"/>
<evidence type="ECO:0000256" key="4">
    <source>
        <dbReference type="SAM" id="MobiDB-lite"/>
    </source>
</evidence>
<evidence type="ECO:0000269" key="5">
    <source>
    </source>
</evidence>
<evidence type="ECO:0000269" key="6">
    <source>
    </source>
</evidence>
<evidence type="ECO:0000269" key="7">
    <source>
    </source>
</evidence>
<evidence type="ECO:0000269" key="8">
    <source>
    </source>
</evidence>
<evidence type="ECO:0000269" key="9">
    <source>
    </source>
</evidence>
<evidence type="ECO:0000269" key="10">
    <source>
    </source>
</evidence>
<evidence type="ECO:0000303" key="11">
    <source>
    </source>
</evidence>
<evidence type="ECO:0000303" key="12">
    <source>
    </source>
</evidence>
<evidence type="ECO:0000303" key="13">
    <source>
    </source>
</evidence>
<evidence type="ECO:0000305" key="14"/>
<evidence type="ECO:0007744" key="15">
    <source>
        <dbReference type="PDB" id="3SS3"/>
    </source>
</evidence>
<evidence type="ECO:0007744" key="16">
    <source>
        <dbReference type="PDB" id="3SS4"/>
    </source>
</evidence>
<evidence type="ECO:0007744" key="17">
    <source>
        <dbReference type="PDB" id="3SS5"/>
    </source>
</evidence>
<evidence type="ECO:0007744" key="18">
    <source>
        <dbReference type="PDB" id="4JKT"/>
    </source>
</evidence>
<evidence type="ECO:0007744" key="19">
    <source>
        <dbReference type="PDB" id="5W2J"/>
    </source>
</evidence>
<evidence type="ECO:0007744" key="20">
    <source>
    </source>
</evidence>
<evidence type="ECO:0007829" key="21">
    <source>
        <dbReference type="PDB" id="3SS3"/>
    </source>
</evidence>
<evidence type="ECO:0007829" key="22">
    <source>
        <dbReference type="PDB" id="3SS5"/>
    </source>
</evidence>
<evidence type="ECO:0007829" key="23">
    <source>
        <dbReference type="PDB" id="4JKT"/>
    </source>
</evidence>
<evidence type="ECO:0007829" key="24">
    <source>
        <dbReference type="PDB" id="5W2J"/>
    </source>
</evidence>
<reference key="1">
    <citation type="journal article" date="2004" name="DNA Res.">
        <title>Prediction of the coding sequences of mouse homologues of KIAA gene: IV. The complete nucleotide sequences of 500 mouse KIAA-homologous cDNAs identified by screening of terminal sequences of cDNA clones randomly sampled from size-fractionated libraries.</title>
        <authorList>
            <person name="Okazaki N."/>
            <person name="Kikuno R."/>
            <person name="Ohara R."/>
            <person name="Inamoto S."/>
            <person name="Koseki H."/>
            <person name="Hiraoka S."/>
            <person name="Saga Y."/>
            <person name="Seino S."/>
            <person name="Nishimura M."/>
            <person name="Kaisho T."/>
            <person name="Hoshino K."/>
            <person name="Kitamura H."/>
            <person name="Nagase T."/>
            <person name="Ohara O."/>
            <person name="Koga H."/>
        </authorList>
    </citation>
    <scope>NUCLEOTIDE SEQUENCE [LARGE SCALE MRNA] (ISOFORM 2)</scope>
    <source>
        <tissue>Embryonic tail</tissue>
    </source>
</reference>
<reference key="2">
    <citation type="journal article" date="2009" name="PLoS Biol.">
        <title>Lineage-specific biology revealed by a finished genome assembly of the mouse.</title>
        <authorList>
            <person name="Church D.M."/>
            <person name="Goodstadt L."/>
            <person name="Hillier L.W."/>
            <person name="Zody M.C."/>
            <person name="Goldstein S."/>
            <person name="She X."/>
            <person name="Bult C.J."/>
            <person name="Agarwala R."/>
            <person name="Cherry J.L."/>
            <person name="DiCuccio M."/>
            <person name="Hlavina W."/>
            <person name="Kapustin Y."/>
            <person name="Meric P."/>
            <person name="Maglott D."/>
            <person name="Birtle Z."/>
            <person name="Marques A.C."/>
            <person name="Graves T."/>
            <person name="Zhou S."/>
            <person name="Teague B."/>
            <person name="Potamousis K."/>
            <person name="Churas C."/>
            <person name="Place M."/>
            <person name="Herschleb J."/>
            <person name="Runnheim R."/>
            <person name="Forrest D."/>
            <person name="Amos-Landgraf J."/>
            <person name="Schwartz D.C."/>
            <person name="Cheng Z."/>
            <person name="Lindblad-Toh K."/>
            <person name="Eichler E.E."/>
            <person name="Ponting C.P."/>
        </authorList>
    </citation>
    <scope>NUCLEOTIDE SEQUENCE [LARGE SCALE GENOMIC DNA]</scope>
    <scope>ALTERNATIVE SPLICING</scope>
    <source>
        <strain>C57BL/6J</strain>
    </source>
</reference>
<reference key="3">
    <citation type="journal article" date="2006" name="J. Cell Sci.">
        <title>Brain-specific BNIP-2-homology protein Caytaxin relocalises glutaminase to neurite terminals and reduces glutamate levels.</title>
        <authorList>
            <person name="Buschdorf J.P."/>
            <person name="Li Chew L."/>
            <person name="Zhang B."/>
            <person name="Cao Q."/>
            <person name="Liang F.Y."/>
            <person name="Liou Y.C."/>
            <person name="Zhou Y.T."/>
            <person name="Low B.C."/>
        </authorList>
    </citation>
    <scope>INTERACTION WITH ATCAY</scope>
</reference>
<reference key="4">
    <citation type="journal article" date="2006" name="J. Neurosci.">
        <title>Mice lacking brain/kidney phosphate-activated glutaminase have impaired glutamatergic synaptic transmission, altered breathing, disorganized goal-directed behavior and die shortly after birth.</title>
        <authorList>
            <person name="Masson J."/>
            <person name="Darmon M."/>
            <person name="Conjard A."/>
            <person name="Chuhma N."/>
            <person name="Ropert N."/>
            <person name="Thoby-Brisson M."/>
            <person name="Foutz A.S."/>
            <person name="Parrot S."/>
            <person name="Miller G.M."/>
            <person name="Jorisch R."/>
            <person name="Polan J."/>
            <person name="Hamon M."/>
            <person name="Hen R."/>
            <person name="Rayport S."/>
        </authorList>
    </citation>
    <scope>DISRUPTION PHENOTYPE</scope>
    <scope>FUNCTION</scope>
    <scope>SUBCELLULAR LOCATION</scope>
</reference>
<reference key="5">
    <citation type="journal article" date="2010" name="Cell">
        <title>A tissue-specific atlas of mouse protein phosphorylation and expression.</title>
        <authorList>
            <person name="Huttlin E.L."/>
            <person name="Jedrychowski M.P."/>
            <person name="Elias J.E."/>
            <person name="Goswami T."/>
            <person name="Rad R."/>
            <person name="Beausoleil S.A."/>
            <person name="Villen J."/>
            <person name="Haas W."/>
            <person name="Sowa M.E."/>
            <person name="Gygi S.P."/>
        </authorList>
    </citation>
    <scope>IDENTIFICATION BY MASS SPECTROMETRY [LARGE SCALE ANALYSIS]</scope>
    <source>
        <tissue>Brain</tissue>
        <tissue>Brown adipose tissue</tissue>
        <tissue>Heart</tissue>
        <tissue>Kidney</tissue>
        <tissue>Liver</tissue>
        <tissue>Lung</tissue>
        <tissue>Pancreas</tissue>
        <tissue>Spleen</tissue>
        <tissue>Testis</tissue>
    </source>
</reference>
<reference key="6">
    <citation type="journal article" date="2012" name="J. Cereb. Blood Flow Metab.">
        <title>Brain slices from glutaminase-deficient mice metabolize less glutamine: a cellular metabolomic study with carbon 13 NMR.</title>
        <authorList>
            <person name="El Hage M."/>
            <person name="Masson J."/>
            <person name="Conjard-Duplany A."/>
            <person name="Ferrier B."/>
            <person name="Baverel G."/>
            <person name="Martin G."/>
        </authorList>
    </citation>
    <scope>FUNCTION</scope>
</reference>
<reference key="7">
    <citation type="journal article" date="2013" name="Mol. Cell">
        <title>SIRT5-mediated lysine desuccinylation impacts diverse metabolic pathways.</title>
        <authorList>
            <person name="Park J."/>
            <person name="Chen Y."/>
            <person name="Tishkoff D.X."/>
            <person name="Peng C."/>
            <person name="Tan M."/>
            <person name="Dai L."/>
            <person name="Xie Z."/>
            <person name="Zhang Y."/>
            <person name="Zwaans B.M."/>
            <person name="Skinner M.E."/>
            <person name="Lombard D.B."/>
            <person name="Zhao Y."/>
        </authorList>
    </citation>
    <scope>SUCCINYLATION [LARGE SCALE ANALYSIS] AT LYS-135 AND LYS-169</scope>
    <scope>IDENTIFICATION BY MASS SPECTROMETRY [LARGE SCALE ANALYSIS]</scope>
    <source>
        <tissue>Embryonic fibroblast</tissue>
    </source>
</reference>
<reference evidence="15 16 17" key="8">
    <citation type="journal article" date="2012" name="Proc. Natl. Acad. Sci. U.S.A.">
        <title>Mitochondrial localization and structure-based phosphate activation mechanism of glutaminase C with implications for cancer metabolism.</title>
        <authorList>
            <person name="Cassago A."/>
            <person name="Ferreira A.P."/>
            <person name="Ferreira I.M."/>
            <person name="Fornezari C."/>
            <person name="Gomes E.R."/>
            <person name="Greene K.S."/>
            <person name="Pereira H.M."/>
            <person name="Garratt R.C."/>
            <person name="Dias S.M."/>
            <person name="Ambrosio A.L."/>
        </authorList>
    </citation>
    <scope>X-RAY CRYSTALLOGRAPHY (2.42 ANGSTROMS) OF 128-555 (ISOFORM 2) IN COMPLEX WITH GLUTAMATE AND PHOSPHATE</scope>
    <scope>FUNCTION</scope>
    <scope>CATALYTIC ACTIVITY</scope>
    <scope>ACTIVITY REGULATION</scope>
    <scope>ALTERNATIVE SPLICING</scope>
    <scope>MUTAGENESIS OF PHE-394</scope>
    <scope>SUBUNIT</scope>
</reference>
<reference evidence="18" key="9">
    <citation type="journal article" date="2013" name="J. Biol. Chem.">
        <title>Active glutaminase C self-assembles into a supratetrameric oligomer that can be disrupted by an allosteric inhibitor.</title>
        <authorList>
            <person name="Ferreira A.P."/>
            <person name="Cassago A."/>
            <person name="Goncalves Kde A."/>
            <person name="Dias M.M."/>
            <person name="Adamoski D."/>
            <person name="Ascencao C.F."/>
            <person name="Honorato R.V."/>
            <person name="de Oliveira J.F."/>
            <person name="Ferreira I.M."/>
            <person name="Fornezari C."/>
            <person name="Bettini J."/>
            <person name="Oliveira P.S."/>
            <person name="Paes Leme A.F."/>
            <person name="Portugal R.V."/>
            <person name="Ambrosio A.L."/>
            <person name="Dias S.M."/>
        </authorList>
    </citation>
    <scope>X-RAY CRYSTALLOGRAPHY (2.77 ANGSTROMS) OF 128-555</scope>
    <scope>SUBUNIT</scope>
    <scope>CATALYTIC ACTIVITY</scope>
    <scope>ACTIVITY REGULATION</scope>
    <scope>MUTAGENESIS OF LYS-202; LYS-207 AND LYS-325</scope>
</reference>
<reference evidence="19" key="10">
    <citation type="journal article" date="2016" name="J. Biol. Chem.">
        <title>Mechanistic basis of glutaminase activation: a key enzyme that promotes glutamine metabolism in cancer cells.</title>
        <authorList>
            <person name="Li Y."/>
            <person name="Erickson J.W."/>
            <person name="Stalnecker C.A."/>
            <person name="Katt W.P."/>
            <person name="Huang Q."/>
            <person name="Cerione R.A."/>
            <person name="Ramachandran S."/>
        </authorList>
    </citation>
    <scope>X-RAY CRYSTALLOGRAPHY (2.50 ANGSTROMS) OF 141-551 OF MUTANT LYS-391</scope>
    <scope>SUBUNIT</scope>
    <scope>CATALYTIC ACTIVITY</scope>
    <scope>ACTIVITY REGULATION</scope>
    <scope>SUBCELLULAR LOCATION</scope>
    <scope>DOMAIN</scope>
    <scope>MUTAGENESIS OF LYS-316; GLY-320; LYS-325 AND ASP-391</scope>
</reference>
<keyword id="KW-0002">3D-structure</keyword>
<keyword id="KW-0007">Acetylation</keyword>
<keyword id="KW-0025">Alternative splicing</keyword>
<keyword id="KW-0040">ANK repeat</keyword>
<keyword id="KW-0963">Cytoplasm</keyword>
<keyword id="KW-0378">Hydrolase</keyword>
<keyword id="KW-0496">Mitochondrion</keyword>
<keyword id="KW-0597">Phosphoprotein</keyword>
<keyword id="KW-1185">Reference proteome</keyword>
<keyword id="KW-0677">Repeat</keyword>
<keyword id="KW-0809">Transit peptide</keyword>
<feature type="transit peptide" description="Mitochondrion" evidence="3">
    <location>
        <begin position="1"/>
        <end position="54"/>
    </location>
</feature>
<feature type="chain" id="PRO_0000417583" description="Glutaminase kidney isoform, mitochondrial 68 kDa chain">
    <location>
        <begin position="55"/>
        <end position="674"/>
    </location>
</feature>
<feature type="chain" id="PRO_0000447413" description="Glutaminase kidney isoform, mitochondrial 65 kDa chain" evidence="2">
    <location>
        <begin position="73"/>
        <end position="674"/>
    </location>
</feature>
<feature type="repeat" description="ANK 1">
    <location>
        <begin position="590"/>
        <end position="619"/>
    </location>
</feature>
<feature type="repeat" description="ANK 2">
    <location>
        <begin position="624"/>
        <end position="653"/>
    </location>
</feature>
<feature type="region of interest" description="Disordered" evidence="4">
    <location>
        <begin position="56"/>
        <end position="123"/>
    </location>
</feature>
<feature type="region of interest" description="Highly mobile activation loop" evidence="10">
    <location>
        <begin position="320"/>
        <end position="327"/>
    </location>
</feature>
<feature type="region of interest" description="Disordered" evidence="4">
    <location>
        <begin position="652"/>
        <end position="674"/>
    </location>
</feature>
<feature type="compositionally biased region" description="Gly residues" evidence="4">
    <location>
        <begin position="58"/>
        <end position="71"/>
    </location>
</feature>
<feature type="compositionally biased region" description="Low complexity" evidence="4">
    <location>
        <begin position="89"/>
        <end position="101"/>
    </location>
</feature>
<feature type="binding site" evidence="7 17">
    <location>
        <position position="291"/>
    </location>
    <ligand>
        <name>substrate</name>
    </ligand>
</feature>
<feature type="binding site" evidence="7 17">
    <location>
        <position position="340"/>
    </location>
    <ligand>
        <name>substrate</name>
    </ligand>
</feature>
<feature type="binding site" evidence="7 17">
    <location>
        <position position="386"/>
    </location>
    <ligand>
        <name>substrate</name>
    </ligand>
</feature>
<feature type="binding site" evidence="7 17">
    <location>
        <position position="393"/>
    </location>
    <ligand>
        <name>substrate</name>
    </ligand>
</feature>
<feature type="binding site" evidence="7 17">
    <location>
        <position position="419"/>
    </location>
    <ligand>
        <name>substrate</name>
    </ligand>
</feature>
<feature type="binding site" evidence="7 17">
    <location>
        <position position="471"/>
    </location>
    <ligand>
        <name>substrate</name>
    </ligand>
</feature>
<feature type="binding site" evidence="7 17">
    <location>
        <position position="489"/>
    </location>
    <ligand>
        <name>substrate</name>
    </ligand>
</feature>
<feature type="site" description="Cleavage; by MPP" evidence="2">
    <location>
        <begin position="72"/>
        <end position="73"/>
    </location>
</feature>
<feature type="modified residue" description="N6-succinyllysine" evidence="20">
    <location>
        <position position="135"/>
    </location>
</feature>
<feature type="modified residue" description="N6-succinyllysine" evidence="20">
    <location>
        <position position="169"/>
    </location>
</feature>
<feature type="modified residue" description="N6-acetyllysine" evidence="1">
    <location>
        <position position="316"/>
    </location>
</feature>
<feature type="modified residue" description="Phosphoserine" evidence="2">
    <location>
        <position position="657"/>
    </location>
</feature>
<feature type="splice variant" id="VSP_043804" description="In isoform 2." evidence="11">
    <original>VKSVINLLFAAYTGDVSALRRFALSAMDMEQRDYDSRTALHVAAAEGHVEVVKFLLEACKVNPFPKDRWNNTPMDEALHFGHHDVFKILQEYQVQYTPQGDSDDGKGNQTVHKNLDGLL</original>
    <variation>HSFGPLDYESLQQELALKDTVWKKVSPESSDDTSTTVVYRMESLGERS</variation>
    <location>
        <begin position="556"/>
        <end position="674"/>
    </location>
</feature>
<feature type="mutagenesis site" description="Increased stimulation of enzyme activity by phosphate." evidence="9">
    <original>K</original>
    <variation>E</variation>
    <location>
        <position position="202"/>
    </location>
</feature>
<feature type="mutagenesis site" description="Increased stimulation of enzyme activity by phosphate." evidence="9">
    <original>K</original>
    <variation>E</variation>
    <location>
        <position position="207"/>
    </location>
</feature>
<feature type="mutagenesis site" description="Increased enzyme activity in the absence of phosphate. No effect on stimulation of enzyme activity by phosphate." evidence="10">
    <original>Y</original>
    <variation>F</variation>
    <location>
        <position position="254"/>
    </location>
</feature>
<feature type="mutagenesis site" description="Forms dimers with full, phosphate-independent activity; when associated with A-325 and K-391." evidence="10">
    <original>K</original>
    <variation>Q</variation>
    <location>
        <position position="316"/>
    </location>
</feature>
<feature type="mutagenesis site" description="Loss of enzyme activity." evidence="10">
    <original>G</original>
    <variation>P</variation>
    <location>
        <position position="320"/>
    </location>
</feature>
<feature type="mutagenesis site" description="Constitutive enzyme activity that is fully active also in the absence phosphate. Forms oligomers with full, phosphate-independent activity; when associated with K-391. Forms dimers with full, phosphate-independent activity; when associated with Q-316 and K-391." evidence="9 10">
    <original>K</original>
    <variation>A</variation>
    <location>
        <position position="325"/>
    </location>
</feature>
<feature type="mutagenesis site" description="Abolishes assembly of dimers into functional tetramers. Loss of enzyme activity. Forms oligomers with full, phosphate-independent activity; when associated with A-325. Forms dimers with full, phosphate-independent activity; when associated with Q-316 and A-325." evidence="10">
    <original>D</original>
    <variation>K</variation>
    <location>
        <position position="391"/>
    </location>
</feature>
<feature type="mutagenesis site" description="Impairs tetramerization and promotes formation of homodimers. Impairs activation by phosphate." evidence="7">
    <original>F</original>
    <variation>S</variation>
    <location>
        <position position="394"/>
    </location>
</feature>
<feature type="helix" evidence="21">
    <location>
        <begin position="145"/>
        <end position="151"/>
    </location>
</feature>
<feature type="strand" evidence="22">
    <location>
        <begin position="157"/>
        <end position="160"/>
    </location>
</feature>
<feature type="helix" evidence="21">
    <location>
        <begin position="161"/>
        <end position="170"/>
    </location>
</feature>
<feature type="helix" evidence="21">
    <location>
        <begin position="178"/>
        <end position="180"/>
    </location>
</feature>
<feature type="helix" evidence="21">
    <location>
        <begin position="181"/>
        <end position="193"/>
    </location>
</feature>
<feature type="strand" evidence="24">
    <location>
        <begin position="194"/>
        <end position="200"/>
    </location>
</feature>
<feature type="helix" evidence="21">
    <location>
        <begin position="202"/>
        <end position="209"/>
    </location>
</feature>
<feature type="helix" evidence="24">
    <location>
        <begin position="210"/>
        <end position="212"/>
    </location>
</feature>
<feature type="helix" evidence="21">
    <location>
        <begin position="213"/>
        <end position="220"/>
    </location>
</feature>
<feature type="strand" evidence="21">
    <location>
        <begin position="224"/>
        <end position="227"/>
    </location>
</feature>
<feature type="helix" evidence="21">
    <location>
        <begin position="229"/>
        <end position="243"/>
    </location>
</feature>
<feature type="strand" evidence="21">
    <location>
        <begin position="249"/>
        <end position="251"/>
    </location>
</feature>
<feature type="helix" evidence="21">
    <location>
        <begin position="256"/>
        <end position="259"/>
    </location>
</feature>
<feature type="strand" evidence="21">
    <location>
        <begin position="267"/>
        <end position="272"/>
    </location>
</feature>
<feature type="strand" evidence="21">
    <location>
        <begin position="277"/>
        <end position="282"/>
    </location>
</feature>
<feature type="helix" evidence="21">
    <location>
        <begin position="290"/>
        <end position="293"/>
    </location>
</feature>
<feature type="helix" evidence="21">
    <location>
        <begin position="294"/>
        <end position="313"/>
    </location>
</feature>
<feature type="strand" evidence="23">
    <location>
        <begin position="321"/>
        <end position="328"/>
    </location>
</feature>
<feature type="strand" evidence="22">
    <location>
        <begin position="332"/>
        <end position="335"/>
    </location>
</feature>
<feature type="helix" evidence="21">
    <location>
        <begin position="340"/>
        <end position="349"/>
    </location>
</feature>
<feature type="turn" evidence="21">
    <location>
        <begin position="350"/>
        <end position="353"/>
    </location>
</feature>
<feature type="helix" evidence="21">
    <location>
        <begin position="356"/>
        <end position="370"/>
    </location>
</feature>
<feature type="turn" evidence="21">
    <location>
        <begin position="371"/>
        <end position="373"/>
    </location>
</feature>
<feature type="strand" evidence="23">
    <location>
        <begin position="376"/>
        <end position="378"/>
    </location>
</feature>
<feature type="helix" evidence="21">
    <location>
        <begin position="380"/>
        <end position="388"/>
    </location>
</feature>
<feature type="helix" evidence="21">
    <location>
        <begin position="391"/>
        <end position="402"/>
    </location>
</feature>
<feature type="helix" evidence="21">
    <location>
        <begin position="412"/>
        <end position="423"/>
    </location>
</feature>
<feature type="strand" evidence="21">
    <location>
        <begin position="425"/>
        <end position="427"/>
    </location>
</feature>
<feature type="helix" evidence="21">
    <location>
        <begin position="429"/>
        <end position="440"/>
    </location>
</feature>
<feature type="turn" evidence="21">
    <location>
        <begin position="441"/>
        <end position="443"/>
    </location>
</feature>
<feature type="turn" evidence="21">
    <location>
        <begin position="446"/>
        <end position="448"/>
    </location>
</feature>
<feature type="helix" evidence="21">
    <location>
        <begin position="455"/>
        <end position="468"/>
    </location>
</feature>
<feature type="helix" evidence="21">
    <location>
        <begin position="471"/>
        <end position="473"/>
    </location>
</feature>
<feature type="helix" evidence="21">
    <location>
        <begin position="474"/>
        <end position="480"/>
    </location>
</feature>
<feature type="strand" evidence="21">
    <location>
        <begin position="485"/>
        <end position="487"/>
    </location>
</feature>
<feature type="strand" evidence="21">
    <location>
        <begin position="491"/>
        <end position="497"/>
    </location>
</feature>
<feature type="turn" evidence="21">
    <location>
        <begin position="498"/>
        <end position="500"/>
    </location>
</feature>
<feature type="strand" evidence="21">
    <location>
        <begin position="501"/>
        <end position="506"/>
    </location>
</feature>
<feature type="strand" evidence="21">
    <location>
        <begin position="508"/>
        <end position="510"/>
    </location>
</feature>
<feature type="strand" evidence="22">
    <location>
        <begin position="514"/>
        <end position="516"/>
    </location>
</feature>
<feature type="helix" evidence="21">
    <location>
        <begin position="517"/>
        <end position="529"/>
    </location>
</feature>
<protein>
    <recommendedName>
        <fullName>Glutaminase kidney isoform, mitochondrial</fullName>
        <shortName>GLS</shortName>
        <ecNumber evidence="7 9 10">3.5.1.2</ecNumber>
    </recommendedName>
    <component>
        <recommendedName>
            <fullName evidence="2">Glutaminase kidney isoform, mitochondrial 68 kDa chain</fullName>
        </recommendedName>
    </component>
    <component>
        <recommendedName>
            <fullName evidence="2">Glutaminase kidney isoform, mitochondrial 65 kDa chain</fullName>
        </recommendedName>
    </component>
</protein>
<organism>
    <name type="scientific">Mus musculus</name>
    <name type="common">Mouse</name>
    <dbReference type="NCBI Taxonomy" id="10090"/>
    <lineage>
        <taxon>Eukaryota</taxon>
        <taxon>Metazoa</taxon>
        <taxon>Chordata</taxon>
        <taxon>Craniata</taxon>
        <taxon>Vertebrata</taxon>
        <taxon>Euteleostomi</taxon>
        <taxon>Mammalia</taxon>
        <taxon>Eutheria</taxon>
        <taxon>Euarchontoglires</taxon>
        <taxon>Glires</taxon>
        <taxon>Rodentia</taxon>
        <taxon>Myomorpha</taxon>
        <taxon>Muroidea</taxon>
        <taxon>Muridae</taxon>
        <taxon>Murinae</taxon>
        <taxon>Mus</taxon>
        <taxon>Mus</taxon>
    </lineage>
</organism>
<sequence length="674" mass="73964">MMRLRGSAMLRELLLRPPAAVGAVLRRAQPLGTLCRRPRGGSRPTAGLVAAARLHPWWGGGGRAKGPGAGGLSSSPSEILQELGKGGTPPQQQQQQQQQPGASPPAAPGPKDSPGETDAFGNSEGKEMVAAGDNKIKQGLLPSLEDLLFYTIAEGQEKIPVHKFITALKSTGLRTSDPRLKECMDMLRLTLQTTSDGVMLDKDLFKKCVQSNIVLLTQAFRRKFVIPDFMSFTSHIDELYESAKKQSGGKVADYIPQLAKFSPDLWGVSVCTVDGQRHSIGDTKVPFCLQSCVKPLKYAIAVNDLGTEYVHRYVGKEPSGLRFNKLFLNEDDKPHNPMVNAGAIVVTSLIKQGVNNAEKFDYVMQFLNKMAGNEYVGFSNATFQSERESGDRNFAIGYYLKEKKCFPEGTDMVGILDFYFQLCSIEVTCESASVMAATLANGGFCPITGERVLSPEAVRNTLSLMHSCGMYDFSGQFAFHVGLPAKSGVAGGILLVVPNVMGMMCWSPPLDKMGNSVKGIHFCHDLVSLCNFHNYDNLRHFAKKLDPRREGGDQRVKSVINLLFAAYTGDVSALRRFALSAMDMEQRDYDSRTALHVAAAEGHVEVVKFLLEACKVNPFPKDRWNNTPMDEALHFGHHDVFKILQEYQVQYTPQGDSDDGKGNQTVHKNLDGLL</sequence>
<comment type="function">
    <text evidence="5 7 8">Catalyzes the first reaction in the primary pathway for the renal catabolism of glutamine. Plays a role in maintaining acid-base homeostasis. Regulates the levels of the neurotransmitter glutamate, the main excitatory neurotransmitter in the brain.</text>
</comment>
<comment type="catalytic activity">
    <reaction evidence="7 9 10">
        <text>L-glutamine + H2O = L-glutamate + NH4(+)</text>
        <dbReference type="Rhea" id="RHEA:15889"/>
        <dbReference type="ChEBI" id="CHEBI:15377"/>
        <dbReference type="ChEBI" id="CHEBI:28938"/>
        <dbReference type="ChEBI" id="CHEBI:29985"/>
        <dbReference type="ChEBI" id="CHEBI:58359"/>
        <dbReference type="EC" id="3.5.1.2"/>
    </reaction>
</comment>
<comment type="activity regulation">
    <text evidence="7 9 10">Isoform 1 and isoform 2 are activated by phosphate, due to increased affinity for glutamine (PubMed:22228304, PubMed:23935106, PubMed:27542409). At phosphate concentrations above 10 mM, isoform 2 is more efficient than isoform 1.</text>
</comment>
<comment type="subunit">
    <text evidence="1 6 7 9 10">Homotetramer, dimer of dimers (PubMed:22228304, PubMed:27542409). The tetramers can assemble into rod-like oligomers (in vitro), but the physiological significance of this is not clear (PubMed:23935106). Interacts with RAF1 and MAP2K2 (By similarity). Interacts with ATCAY; the interaction is direct and may control GLS localization, negatively regulating its activity (PubMed:16899818).</text>
</comment>
<comment type="interaction">
    <interactant intactId="EBI-15962029">
        <id>D3Z7P3-2</id>
    </interactant>
    <interactant intactId="EBI-15962029">
        <id>D3Z7P3-2</id>
        <label>Gls</label>
    </interactant>
    <organismsDiffer>false</organismsDiffer>
    <experiments>3</experiments>
</comment>
<comment type="subcellular location">
    <molecule>Isoform 1</molecule>
    <subcellularLocation>
        <location evidence="2">Mitochondrion</location>
    </subcellularLocation>
    <subcellularLocation>
        <location evidence="2">Cytoplasm</location>
        <location evidence="2">Cytosol</location>
    </subcellularLocation>
    <text evidence="2">The 74-kDa cytosolic precursor is translocated into the mitochondria and processed via a 72-kDa intermediate to yield the mature 68- and 65-kDa subunits.</text>
</comment>
<comment type="subcellular location">
    <molecule>Isoform 2</molecule>
    <subcellularLocation>
        <location evidence="5 10">Mitochondrion</location>
    </subcellularLocation>
</comment>
<comment type="subcellular location">
    <molecule>Glutaminase kidney isoform, mitochondrial 68 kDa chain</molecule>
    <subcellularLocation>
        <location evidence="2">Mitochondrion matrix</location>
    </subcellularLocation>
    <text evidence="2">Produced by the proteolytic processing of the 74-kDa cytosolic precursor.</text>
</comment>
<comment type="subcellular location">
    <molecule>Glutaminase kidney isoform, mitochondrial 65 kDa chain</molecule>
    <subcellularLocation>
        <location evidence="2">Mitochondrion matrix</location>
    </subcellularLocation>
    <text evidence="2">Produced by the proteolytic processing of the 74-kDa cytosolic precursor.</text>
</comment>
<comment type="alternative products">
    <event type="alternative splicing"/>
    <isoform>
        <id>D3Z7P3-1</id>
        <name>1</name>
        <name evidence="12">KGA</name>
        <sequence type="displayed"/>
    </isoform>
    <isoform>
        <id>D3Z7P3-2</id>
        <name>2</name>
        <name evidence="13">Glutaminase C</name>
        <name evidence="12 13">GAC</name>
        <sequence type="described" ref="VSP_043804"/>
    </isoform>
</comment>
<comment type="domain">
    <text evidence="10">A highly mobile activation loop at the dimer-dimer interface is important for enzyme activity.</text>
</comment>
<comment type="domain">
    <text evidence="1">The C-terminal ANK repeats prevent the assembly of the supra-tetrameric filaments.</text>
</comment>
<comment type="PTM">
    <text evidence="2">Synthesized as a 74-kDa cytosolic precursor which is proteolytically processed by the mitochondrial-processing peptidase (MPP) via a 72-kDa intermediate to yield the mature mitochondrial 68- and 65-kDa subunits.</text>
</comment>
<comment type="disruption phenotype">
    <text evidence="5">Death during the first days after birth. Pups appear normal and display normal levels of activity, but their activity is disorganized. Pups do not orient to the dam, do not succeed in grasping a nipple and do not feed properly. In addition, they display altered respiration.</text>
</comment>
<comment type="similarity">
    <text evidence="14">Belongs to the glutaminase family.</text>
</comment>
<comment type="sequence caution" evidence="14">
    <conflict type="erroneous initiation">
        <sequence resource="EMBL-CDS" id="BAD32317"/>
    </conflict>
    <text>Extended N-terminus.</text>
</comment>
<accession>D3Z7P3</accession>
<accession>E9PUF0</accession>
<accession>Q69ZX9</accession>
<dbReference type="EC" id="3.5.1.2" evidence="7 9 10"/>
<dbReference type="EMBL" id="AK173039">
    <property type="protein sequence ID" value="BAD32317.1"/>
    <property type="status" value="ALT_INIT"/>
    <property type="molecule type" value="mRNA"/>
</dbReference>
<dbReference type="EMBL" id="AC123752">
    <property type="status" value="NOT_ANNOTATED_CDS"/>
    <property type="molecule type" value="Genomic_DNA"/>
</dbReference>
<dbReference type="CCDS" id="CCDS35561.1">
    <molecule id="D3Z7P3-1"/>
</dbReference>
<dbReference type="CCDS" id="CCDS48256.1">
    <molecule id="D3Z7P3-2"/>
</dbReference>
<dbReference type="RefSeq" id="NP_001074550.1">
    <molecule id="D3Z7P3-1"/>
    <property type="nucleotide sequence ID" value="NM_001081081.2"/>
</dbReference>
<dbReference type="RefSeq" id="NP_001106854.1">
    <molecule id="D3Z7P3-2"/>
    <property type="nucleotide sequence ID" value="NM_001113383.1"/>
</dbReference>
<dbReference type="PDB" id="3SS3">
    <property type="method" value="X-ray"/>
    <property type="resolution" value="2.42 A"/>
    <property type="chains" value="A/B/C/D=128-602"/>
</dbReference>
<dbReference type="PDB" id="3SS4">
    <property type="method" value="X-ray"/>
    <property type="resolution" value="2.85 A"/>
    <property type="chains" value="A/B/C/D=128-602"/>
</dbReference>
<dbReference type="PDB" id="3SS5">
    <property type="method" value="X-ray"/>
    <property type="resolution" value="2.80 A"/>
    <property type="chains" value="A/B/C/D=128-602"/>
</dbReference>
<dbReference type="PDB" id="4JKT">
    <property type="method" value="X-ray"/>
    <property type="resolution" value="2.77 A"/>
    <property type="chains" value="A/B/C/D=128-555"/>
</dbReference>
<dbReference type="PDB" id="5W2J">
    <property type="method" value="X-ray"/>
    <property type="resolution" value="2.50 A"/>
    <property type="chains" value="A/B=141-551"/>
</dbReference>
<dbReference type="PDB" id="8EC6">
    <property type="method" value="EM"/>
    <property type="resolution" value="3.10 A"/>
    <property type="chains" value="A/B/C/D/E/F/G/H=128-602"/>
</dbReference>
<dbReference type="PDBsum" id="3SS3"/>
<dbReference type="PDBsum" id="3SS4"/>
<dbReference type="PDBsum" id="3SS5"/>
<dbReference type="PDBsum" id="4JKT"/>
<dbReference type="PDBsum" id="5W2J"/>
<dbReference type="PDBsum" id="8EC6"/>
<dbReference type="SMR" id="D3Z7P3"/>
<dbReference type="BioGRID" id="199955">
    <property type="interactions" value="17"/>
</dbReference>
<dbReference type="DIP" id="DIP-60006N"/>
<dbReference type="FunCoup" id="D3Z7P3">
    <property type="interactions" value="2440"/>
</dbReference>
<dbReference type="IntAct" id="D3Z7P3">
    <property type="interactions" value="2"/>
</dbReference>
<dbReference type="MINT" id="D3Z7P3"/>
<dbReference type="STRING" id="10090.ENSMUSP00000110158"/>
<dbReference type="BindingDB" id="D3Z7P3"/>
<dbReference type="ChEMBL" id="CHEMBL4523110"/>
<dbReference type="GlyGen" id="D3Z7P3">
    <property type="glycosylation" value="3 sites, 1 N-linked glycan (1 site), 1 O-linked glycan (1 site)"/>
</dbReference>
<dbReference type="iPTMnet" id="D3Z7P3"/>
<dbReference type="MetOSite" id="D3Z7P3"/>
<dbReference type="PhosphoSitePlus" id="D3Z7P3"/>
<dbReference type="SwissPalm" id="D3Z7P3"/>
<dbReference type="jPOST" id="D3Z7P3"/>
<dbReference type="PaxDb" id="10090-ENSMUSP00000110158"/>
<dbReference type="PeptideAtlas" id="D3Z7P3"/>
<dbReference type="ProteomicsDB" id="271395">
    <molecule id="D3Z7P3-1"/>
</dbReference>
<dbReference type="ProteomicsDB" id="271396">
    <molecule id="D3Z7P3-2"/>
</dbReference>
<dbReference type="Pumba" id="D3Z7P3"/>
<dbReference type="Antibodypedia" id="34041">
    <property type="antibodies" value="458 antibodies from 33 providers"/>
</dbReference>
<dbReference type="Ensembl" id="ENSMUST00000114510.8">
    <molecule id="D3Z7P3-2"/>
    <property type="protein sequence ID" value="ENSMUSP00000110155.2"/>
    <property type="gene ID" value="ENSMUSG00000026103.15"/>
</dbReference>
<dbReference type="Ensembl" id="ENSMUST00000114513.9">
    <molecule id="D3Z7P3-1"/>
    <property type="protein sequence ID" value="ENSMUSP00000110158.3"/>
    <property type="gene ID" value="ENSMUSG00000026103.15"/>
</dbReference>
<dbReference type="GeneID" id="14660"/>
<dbReference type="KEGG" id="mmu:14660"/>
<dbReference type="UCSC" id="uc007aye.2">
    <molecule id="D3Z7P3-1"/>
    <property type="organism name" value="mouse"/>
</dbReference>
<dbReference type="UCSC" id="uc011wko.1">
    <molecule id="D3Z7P3-2"/>
    <property type="organism name" value="mouse"/>
</dbReference>
<dbReference type="AGR" id="MGI:95752"/>
<dbReference type="CTD" id="2744"/>
<dbReference type="MGI" id="MGI:95752">
    <property type="gene designation" value="Gls"/>
</dbReference>
<dbReference type="VEuPathDB" id="HostDB:ENSMUSG00000026103"/>
<dbReference type="eggNOG" id="KOG0506">
    <property type="taxonomic scope" value="Eukaryota"/>
</dbReference>
<dbReference type="GeneTree" id="ENSGT00390000010463"/>
<dbReference type="HOGENOM" id="CLU_016439_1_1_1"/>
<dbReference type="InParanoid" id="D3Z7P3"/>
<dbReference type="OMA" id="FACPLSG"/>
<dbReference type="OrthoDB" id="9995210at2759"/>
<dbReference type="PhylomeDB" id="D3Z7P3"/>
<dbReference type="TreeFam" id="TF313359"/>
<dbReference type="Reactome" id="R-MMU-210500">
    <property type="pathway name" value="Glutamate Neurotransmitter Release Cycle"/>
</dbReference>
<dbReference type="Reactome" id="R-MMU-5628897">
    <property type="pathway name" value="TP53 Regulates Metabolic Genes"/>
</dbReference>
<dbReference type="Reactome" id="R-MMU-8964539">
    <property type="pathway name" value="Glutamate and glutamine metabolism"/>
</dbReference>
<dbReference type="BioGRID-ORCS" id="14660">
    <property type="hits" value="14 hits in 78 CRISPR screens"/>
</dbReference>
<dbReference type="CD-CODE" id="CE726F99">
    <property type="entry name" value="Postsynaptic density"/>
</dbReference>
<dbReference type="ChiTaRS" id="Gls">
    <property type="organism name" value="mouse"/>
</dbReference>
<dbReference type="EvolutionaryTrace" id="D3Z7P3"/>
<dbReference type="PRO" id="PR:D3Z7P3"/>
<dbReference type="Proteomes" id="UP000000589">
    <property type="component" value="Chromosome 1"/>
</dbReference>
<dbReference type="RNAct" id="D3Z7P3">
    <property type="molecule type" value="protein"/>
</dbReference>
<dbReference type="Bgee" id="ENSMUSG00000026103">
    <property type="expression patterns" value="Expressed in pontine nuclear group and 234 other cell types or tissues"/>
</dbReference>
<dbReference type="ExpressionAtlas" id="D3Z7P3">
    <property type="expression patterns" value="baseline and differential"/>
</dbReference>
<dbReference type="GO" id="GO:0005829">
    <property type="term" value="C:cytosol"/>
    <property type="evidence" value="ECO:0007669"/>
    <property type="project" value="UniProtKB-SubCell"/>
</dbReference>
<dbReference type="GO" id="GO:0005759">
    <property type="term" value="C:mitochondrial matrix"/>
    <property type="evidence" value="ECO:0007669"/>
    <property type="project" value="UniProtKB-SubCell"/>
</dbReference>
<dbReference type="GO" id="GO:0045202">
    <property type="term" value="C:synapse"/>
    <property type="evidence" value="ECO:0007669"/>
    <property type="project" value="GOC"/>
</dbReference>
<dbReference type="GO" id="GO:0004359">
    <property type="term" value="F:glutaminase activity"/>
    <property type="evidence" value="ECO:0000314"/>
    <property type="project" value="UniProtKB"/>
</dbReference>
<dbReference type="GO" id="GO:0042802">
    <property type="term" value="F:identical protein binding"/>
    <property type="evidence" value="ECO:0000353"/>
    <property type="project" value="IntAct"/>
</dbReference>
<dbReference type="GO" id="GO:0007268">
    <property type="term" value="P:chemical synaptic transmission"/>
    <property type="evidence" value="ECO:0000315"/>
    <property type="project" value="MGI"/>
</dbReference>
<dbReference type="GO" id="GO:0006537">
    <property type="term" value="P:glutamate biosynthetic process"/>
    <property type="evidence" value="ECO:0000314"/>
    <property type="project" value="UniProtKB"/>
</dbReference>
<dbReference type="GO" id="GO:0006543">
    <property type="term" value="P:glutamine catabolic process"/>
    <property type="evidence" value="ECO:0000314"/>
    <property type="project" value="UniProtKB"/>
</dbReference>
<dbReference type="GO" id="GO:0090461">
    <property type="term" value="P:intracellular glutamate homeostasis"/>
    <property type="evidence" value="ECO:0007669"/>
    <property type="project" value="Ensembl"/>
</dbReference>
<dbReference type="GO" id="GO:0051289">
    <property type="term" value="P:protein homotetramerization"/>
    <property type="evidence" value="ECO:0000314"/>
    <property type="project" value="UniProtKB"/>
</dbReference>
<dbReference type="GO" id="GO:0002087">
    <property type="term" value="P:regulation of respiratory gaseous exchange by nervous system process"/>
    <property type="evidence" value="ECO:0000315"/>
    <property type="project" value="MGI"/>
</dbReference>
<dbReference type="GO" id="GO:0001967">
    <property type="term" value="P:suckling behavior"/>
    <property type="evidence" value="ECO:0000315"/>
    <property type="project" value="MGI"/>
</dbReference>
<dbReference type="FunFam" id="1.10.238.210:FF:000001">
    <property type="entry name" value="Glutaminase kidney isoform, mitochondrial"/>
    <property type="match status" value="1"/>
</dbReference>
<dbReference type="FunFam" id="3.40.710.10:FF:000002">
    <property type="entry name" value="glutaminase kidney isoform, mitochondrial"/>
    <property type="match status" value="1"/>
</dbReference>
<dbReference type="FunFam" id="1.25.40.20:FF:000019">
    <property type="entry name" value="Glutaminase liver isoform, mitochondrial"/>
    <property type="match status" value="1"/>
</dbReference>
<dbReference type="Gene3D" id="1.10.238.210">
    <property type="match status" value="1"/>
</dbReference>
<dbReference type="Gene3D" id="1.25.40.20">
    <property type="entry name" value="Ankyrin repeat-containing domain"/>
    <property type="match status" value="1"/>
</dbReference>
<dbReference type="Gene3D" id="3.40.710.10">
    <property type="entry name" value="DD-peptidase/beta-lactamase superfamily"/>
    <property type="match status" value="1"/>
</dbReference>
<dbReference type="HAMAP" id="MF_00313">
    <property type="entry name" value="Glutaminase"/>
    <property type="match status" value="1"/>
</dbReference>
<dbReference type="InterPro" id="IPR002110">
    <property type="entry name" value="Ankyrin_rpt"/>
</dbReference>
<dbReference type="InterPro" id="IPR036770">
    <property type="entry name" value="Ankyrin_rpt-contain_sf"/>
</dbReference>
<dbReference type="InterPro" id="IPR012338">
    <property type="entry name" value="Beta-lactam/transpept-like"/>
</dbReference>
<dbReference type="InterPro" id="IPR015868">
    <property type="entry name" value="Glutaminase"/>
</dbReference>
<dbReference type="InterPro" id="IPR041541">
    <property type="entry name" value="Glutaminase_EF-hand"/>
</dbReference>
<dbReference type="NCBIfam" id="TIGR03814">
    <property type="entry name" value="Gln_ase"/>
    <property type="match status" value="1"/>
</dbReference>
<dbReference type="PANTHER" id="PTHR12544">
    <property type="entry name" value="GLUTAMINASE"/>
    <property type="match status" value="1"/>
</dbReference>
<dbReference type="PANTHER" id="PTHR12544:SF49">
    <property type="entry name" value="GLUTAMINASE KIDNEY ISOFORM, MITOCHONDRIAL"/>
    <property type="match status" value="1"/>
</dbReference>
<dbReference type="Pfam" id="PF12796">
    <property type="entry name" value="Ank_2"/>
    <property type="match status" value="1"/>
</dbReference>
<dbReference type="Pfam" id="PF17959">
    <property type="entry name" value="EF-hand_14"/>
    <property type="match status" value="1"/>
</dbReference>
<dbReference type="Pfam" id="PF04960">
    <property type="entry name" value="Glutaminase"/>
    <property type="match status" value="1"/>
</dbReference>
<dbReference type="SMART" id="SM00248">
    <property type="entry name" value="ANK"/>
    <property type="match status" value="2"/>
</dbReference>
<dbReference type="SUPFAM" id="SSF48403">
    <property type="entry name" value="Ankyrin repeat"/>
    <property type="match status" value="1"/>
</dbReference>
<dbReference type="SUPFAM" id="SSF56601">
    <property type="entry name" value="beta-lactamase/transpeptidase-like"/>
    <property type="match status" value="1"/>
</dbReference>
<dbReference type="PROSITE" id="PS50297">
    <property type="entry name" value="ANK_REP_REGION"/>
    <property type="match status" value="1"/>
</dbReference>
<dbReference type="PROSITE" id="PS50088">
    <property type="entry name" value="ANK_REPEAT"/>
    <property type="match status" value="1"/>
</dbReference>